<gene>
    <name evidence="1" type="primary">dapD</name>
    <name type="ordered locus">GOX1831</name>
</gene>
<organism>
    <name type="scientific">Gluconobacter oxydans (strain 621H)</name>
    <name type="common">Gluconobacter suboxydans</name>
    <dbReference type="NCBI Taxonomy" id="290633"/>
    <lineage>
        <taxon>Bacteria</taxon>
        <taxon>Pseudomonadati</taxon>
        <taxon>Pseudomonadota</taxon>
        <taxon>Alphaproteobacteria</taxon>
        <taxon>Acetobacterales</taxon>
        <taxon>Acetobacteraceae</taxon>
        <taxon>Gluconobacter</taxon>
    </lineage>
</organism>
<accession>Q5FPX6</accession>
<reference key="1">
    <citation type="journal article" date="2005" name="Nat. Biotechnol.">
        <title>Complete genome sequence of the acetic acid bacterium Gluconobacter oxydans.</title>
        <authorList>
            <person name="Prust C."/>
            <person name="Hoffmeister M."/>
            <person name="Liesegang H."/>
            <person name="Wiezer A."/>
            <person name="Fricke W.F."/>
            <person name="Ehrenreich A."/>
            <person name="Gottschalk G."/>
            <person name="Deppenmeier U."/>
        </authorList>
    </citation>
    <scope>NUCLEOTIDE SEQUENCE [LARGE SCALE GENOMIC DNA]</scope>
    <source>
        <strain>621H</strain>
    </source>
</reference>
<comment type="catalytic activity">
    <reaction evidence="1">
        <text>(S)-2,3,4,5-tetrahydrodipicolinate + succinyl-CoA + H2O = (S)-2-succinylamino-6-oxoheptanedioate + CoA</text>
        <dbReference type="Rhea" id="RHEA:17325"/>
        <dbReference type="ChEBI" id="CHEBI:15377"/>
        <dbReference type="ChEBI" id="CHEBI:15685"/>
        <dbReference type="ChEBI" id="CHEBI:16845"/>
        <dbReference type="ChEBI" id="CHEBI:57287"/>
        <dbReference type="ChEBI" id="CHEBI:57292"/>
        <dbReference type="EC" id="2.3.1.117"/>
    </reaction>
</comment>
<comment type="pathway">
    <text evidence="1">Amino-acid biosynthesis; L-lysine biosynthesis via DAP pathway; LL-2,6-diaminopimelate from (S)-tetrahydrodipicolinate (succinylase route): step 1/3.</text>
</comment>
<comment type="subunit">
    <text evidence="1">Homotrimer.</text>
</comment>
<comment type="subcellular location">
    <subcellularLocation>
        <location evidence="1">Cytoplasm</location>
    </subcellularLocation>
</comment>
<comment type="similarity">
    <text evidence="1">Belongs to the transferase hexapeptide repeat family.</text>
</comment>
<comment type="sequence caution" evidence="2">
    <conflict type="erroneous initiation">
        <sequence resource="EMBL-CDS" id="AAW61570"/>
    </conflict>
</comment>
<sequence length="276" mass="29566">MPNAPLRTAIEALWERRATLSARTEGEDRDVVEKVLSALDAGTLRVAEPFADGWTVHEWLKKAVLLSFRLNDSRVMERGCGGEPAFDKVPLKFDGWDQFRFAEAGFRAVPGAIVRRSAFIAPNVVLMPSFVNVGARVDSGTMIDTWATVGSCAQIGKNCHISGGAGIGGVLEPLQAAPVIIEDDCFIGARSEVAEGVIVEKGSVLSMGVFLGASTKIVDRATGEIFMGRVPAYSVVVPGTLPPKEPGMPSLACAVIVKRVDERTRSKTSINDLLRD</sequence>
<name>DAPD_GLUOX</name>
<evidence type="ECO:0000255" key="1">
    <source>
        <dbReference type="HAMAP-Rule" id="MF_00811"/>
    </source>
</evidence>
<evidence type="ECO:0000305" key="2"/>
<keyword id="KW-0012">Acyltransferase</keyword>
<keyword id="KW-0028">Amino-acid biosynthesis</keyword>
<keyword id="KW-0963">Cytoplasm</keyword>
<keyword id="KW-0220">Diaminopimelate biosynthesis</keyword>
<keyword id="KW-0457">Lysine biosynthesis</keyword>
<keyword id="KW-1185">Reference proteome</keyword>
<keyword id="KW-0677">Repeat</keyword>
<keyword id="KW-0808">Transferase</keyword>
<proteinExistence type="inferred from homology"/>
<dbReference type="EC" id="2.3.1.117" evidence="1"/>
<dbReference type="EMBL" id="CP000009">
    <property type="protein sequence ID" value="AAW61570.1"/>
    <property type="status" value="ALT_INIT"/>
    <property type="molecule type" value="Genomic_DNA"/>
</dbReference>
<dbReference type="RefSeq" id="WP_011253351.1">
    <property type="nucleotide sequence ID" value="NZ_LT900338.1"/>
</dbReference>
<dbReference type="SMR" id="Q5FPX6"/>
<dbReference type="STRING" id="290633.GOX1831"/>
<dbReference type="GeneID" id="56906168"/>
<dbReference type="KEGG" id="gox:GOX1831"/>
<dbReference type="eggNOG" id="COG2171">
    <property type="taxonomic scope" value="Bacteria"/>
</dbReference>
<dbReference type="HOGENOM" id="CLU_050859_0_1_5"/>
<dbReference type="UniPathway" id="UPA00034">
    <property type="reaction ID" value="UER00019"/>
</dbReference>
<dbReference type="Proteomes" id="UP000006375">
    <property type="component" value="Chromosome"/>
</dbReference>
<dbReference type="GO" id="GO:0005737">
    <property type="term" value="C:cytoplasm"/>
    <property type="evidence" value="ECO:0007669"/>
    <property type="project" value="UniProtKB-SubCell"/>
</dbReference>
<dbReference type="GO" id="GO:0008666">
    <property type="term" value="F:2,3,4,5-tetrahydropyridine-2,6-dicarboxylate N-succinyltransferase activity"/>
    <property type="evidence" value="ECO:0007669"/>
    <property type="project" value="UniProtKB-UniRule"/>
</dbReference>
<dbReference type="GO" id="GO:0016779">
    <property type="term" value="F:nucleotidyltransferase activity"/>
    <property type="evidence" value="ECO:0007669"/>
    <property type="project" value="TreeGrafter"/>
</dbReference>
<dbReference type="GO" id="GO:0019877">
    <property type="term" value="P:diaminopimelate biosynthetic process"/>
    <property type="evidence" value="ECO:0007669"/>
    <property type="project" value="UniProtKB-UniRule"/>
</dbReference>
<dbReference type="GO" id="GO:0009089">
    <property type="term" value="P:lysine biosynthetic process via diaminopimelate"/>
    <property type="evidence" value="ECO:0007669"/>
    <property type="project" value="UniProtKB-UniRule"/>
</dbReference>
<dbReference type="CDD" id="cd03350">
    <property type="entry name" value="LbH_THP_succinylT"/>
    <property type="match status" value="1"/>
</dbReference>
<dbReference type="Gene3D" id="2.160.10.10">
    <property type="entry name" value="Hexapeptide repeat proteins"/>
    <property type="match status" value="1"/>
</dbReference>
<dbReference type="Gene3D" id="1.10.166.10">
    <property type="entry name" value="Tetrahydrodipicolinate-N-succinyltransferase, N-terminal domain"/>
    <property type="match status" value="1"/>
</dbReference>
<dbReference type="HAMAP" id="MF_00811">
    <property type="entry name" value="DapD"/>
    <property type="match status" value="1"/>
</dbReference>
<dbReference type="InterPro" id="IPR005664">
    <property type="entry name" value="DapD_Trfase_Hexpep_rpt_fam"/>
</dbReference>
<dbReference type="InterPro" id="IPR001451">
    <property type="entry name" value="Hexapep"/>
</dbReference>
<dbReference type="InterPro" id="IPR023180">
    <property type="entry name" value="THP_succinylTrfase_dom1"/>
</dbReference>
<dbReference type="InterPro" id="IPR037133">
    <property type="entry name" value="THP_succinylTrfase_N_sf"/>
</dbReference>
<dbReference type="InterPro" id="IPR011004">
    <property type="entry name" value="Trimer_LpxA-like_sf"/>
</dbReference>
<dbReference type="NCBIfam" id="TIGR00965">
    <property type="entry name" value="dapD"/>
    <property type="match status" value="1"/>
</dbReference>
<dbReference type="NCBIfam" id="NF008808">
    <property type="entry name" value="PRK11830.1"/>
    <property type="match status" value="1"/>
</dbReference>
<dbReference type="PANTHER" id="PTHR19136:SF52">
    <property type="entry name" value="2,3,4,5-TETRAHYDROPYRIDINE-2,6-DICARBOXYLATE N-SUCCINYLTRANSFERASE"/>
    <property type="match status" value="1"/>
</dbReference>
<dbReference type="PANTHER" id="PTHR19136">
    <property type="entry name" value="MOLYBDENUM COFACTOR GUANYLYLTRANSFERASE"/>
    <property type="match status" value="1"/>
</dbReference>
<dbReference type="Pfam" id="PF14602">
    <property type="entry name" value="Hexapep_2"/>
    <property type="match status" value="1"/>
</dbReference>
<dbReference type="Pfam" id="PF14805">
    <property type="entry name" value="THDPS_N_2"/>
    <property type="match status" value="1"/>
</dbReference>
<dbReference type="SUPFAM" id="SSF51161">
    <property type="entry name" value="Trimeric LpxA-like enzymes"/>
    <property type="match status" value="1"/>
</dbReference>
<feature type="chain" id="PRO_0000196938" description="2,3,4,5-tetrahydropyridine-2,6-dicarboxylate N-succinyltransferase">
    <location>
        <begin position="1"/>
        <end position="276"/>
    </location>
</feature>
<feature type="binding site" evidence="1">
    <location>
        <position position="107"/>
    </location>
    <ligand>
        <name>substrate</name>
    </ligand>
</feature>
<feature type="binding site" evidence="1">
    <location>
        <position position="144"/>
    </location>
    <ligand>
        <name>substrate</name>
    </ligand>
</feature>
<protein>
    <recommendedName>
        <fullName evidence="1">2,3,4,5-tetrahydropyridine-2,6-dicarboxylate N-succinyltransferase</fullName>
        <ecNumber evidence="1">2.3.1.117</ecNumber>
    </recommendedName>
    <alternativeName>
        <fullName evidence="1">Tetrahydrodipicolinate N-succinyltransferase</fullName>
        <shortName evidence="1">THDP succinyltransferase</shortName>
        <shortName evidence="1">THP succinyltransferase</shortName>
        <shortName evidence="1">Tetrahydropicolinate succinylase</shortName>
    </alternativeName>
</protein>